<sequence length="805" mass="92591">MVVIHGVSLTPRFTLPSRPLNTGFNAGNSTLSFFFKKHPLSRKIFAGKQSAEFDSSSQAISASEKVLVPDNLDDDPRGFSQIFDLESQTMEYTEAVRTEDQTMNVVKERGVKPRIVPPPGDGKKIYEIDPMLRTYNNHLDYRYGQYKRLREEIDKYEGGLEAFSRGYEKLGFSRSDAGITYREWAPGAKAASLIGDFNNWNSNADIMTRNEFGVWEIFLPNNTDGSPAIPHGSRVKIRMDTPSGIKDSIPAWIKFSVQAPGEIPFNGIYYDPPEEEKYVFKHPQPKRPKSLRIYEAHVGMSSTEPMVNTYANFRDDVLPRIKKLGYNAVQIMAIQEHSYYASFGYHVTNFFAPSSRCGTPEELKSLIDRAHELGLVVLMDIVHSHASKNTLDGLNMFDGTDAHYFHSGPRGYHWMWDSRLFNYGSWEVLRYLLSNARWWLEEYKFDGFRFDGVTSMMYTHHGLSVGFTGNYTEYFGLETDVDAVNYLMLVNDMIHGLYPEAITVGEDVSGMPTFCIPVQDGGVGFDYRLHMAIADKWIEMLKKRDEDWQMGDIIYTLTNRRWSEKCISYAESHDQALVGDKTIAFWLMDKDMYDFMAVDRPSTPLIDRGIALHKMIRLITMGLGGEGYLNFMGNEFGHPEWIDFPRGEQRLSDGSVIPGNNFSYDKCRRRFDLGDADYLRYRGLQEFDQAMQHLEENYGFMTSEHQFISRKDEADRVIVFERGDLVFVFNFHWTSSYFDYRIGCSKPGKYKIVLDSDDPLFGGFNRLDRKAEYFTYDGLYDERPCSFMVYAPCRTAVVYALANHD</sequence>
<reference key="1">
    <citation type="journal article" date="2000" name="Nature">
        <title>Sequence and analysis of chromosome 5 of the plant Arabidopsis thaliana.</title>
        <authorList>
            <person name="Tabata S."/>
            <person name="Kaneko T."/>
            <person name="Nakamura Y."/>
            <person name="Kotani H."/>
            <person name="Kato T."/>
            <person name="Asamizu E."/>
            <person name="Miyajima N."/>
            <person name="Sasamoto S."/>
            <person name="Kimura T."/>
            <person name="Hosouchi T."/>
            <person name="Kawashima K."/>
            <person name="Kohara M."/>
            <person name="Matsumoto M."/>
            <person name="Matsuno A."/>
            <person name="Muraki A."/>
            <person name="Nakayama S."/>
            <person name="Nakazaki N."/>
            <person name="Naruo K."/>
            <person name="Okumura S."/>
            <person name="Shinpo S."/>
            <person name="Takeuchi C."/>
            <person name="Wada T."/>
            <person name="Watanabe A."/>
            <person name="Yamada M."/>
            <person name="Yasuda M."/>
            <person name="Sato S."/>
            <person name="de la Bastide M."/>
            <person name="Huang E."/>
            <person name="Spiegel L."/>
            <person name="Gnoj L."/>
            <person name="O'Shaughnessy A."/>
            <person name="Preston R."/>
            <person name="Habermann K."/>
            <person name="Murray J."/>
            <person name="Johnson D."/>
            <person name="Rohlfing T."/>
            <person name="Nelson J."/>
            <person name="Stoneking T."/>
            <person name="Pepin K."/>
            <person name="Spieth J."/>
            <person name="Sekhon M."/>
            <person name="Armstrong J."/>
            <person name="Becker M."/>
            <person name="Belter E."/>
            <person name="Cordum H."/>
            <person name="Cordes M."/>
            <person name="Courtney L."/>
            <person name="Courtney W."/>
            <person name="Dante M."/>
            <person name="Du H."/>
            <person name="Edwards J."/>
            <person name="Fryman J."/>
            <person name="Haakensen B."/>
            <person name="Lamar E."/>
            <person name="Latreille P."/>
            <person name="Leonard S."/>
            <person name="Meyer R."/>
            <person name="Mulvaney E."/>
            <person name="Ozersky P."/>
            <person name="Riley A."/>
            <person name="Strowmatt C."/>
            <person name="Wagner-McPherson C."/>
            <person name="Wollam A."/>
            <person name="Yoakum M."/>
            <person name="Bell M."/>
            <person name="Dedhia N."/>
            <person name="Parnell L."/>
            <person name="Shah R."/>
            <person name="Rodriguez M."/>
            <person name="Hoon See L."/>
            <person name="Vil D."/>
            <person name="Baker J."/>
            <person name="Kirchoff K."/>
            <person name="Toth K."/>
            <person name="King L."/>
            <person name="Bahret A."/>
            <person name="Miller B."/>
            <person name="Marra M.A."/>
            <person name="Martienssen R."/>
            <person name="McCombie W.R."/>
            <person name="Wilson R.K."/>
            <person name="Murphy G."/>
            <person name="Bancroft I."/>
            <person name="Volckaert G."/>
            <person name="Wambutt R."/>
            <person name="Duesterhoeft A."/>
            <person name="Stiekema W."/>
            <person name="Pohl T."/>
            <person name="Entian K.-D."/>
            <person name="Terryn N."/>
            <person name="Hartley N."/>
            <person name="Bent E."/>
            <person name="Johnson S."/>
            <person name="Langham S.-A."/>
            <person name="McCullagh B."/>
            <person name="Robben J."/>
            <person name="Grymonprez B."/>
            <person name="Zimmermann W."/>
            <person name="Ramsperger U."/>
            <person name="Wedler H."/>
            <person name="Balke K."/>
            <person name="Wedler E."/>
            <person name="Peters S."/>
            <person name="van Staveren M."/>
            <person name="Dirkse W."/>
            <person name="Mooijman P."/>
            <person name="Klein Lankhorst R."/>
            <person name="Weitzenegger T."/>
            <person name="Bothe G."/>
            <person name="Rose M."/>
            <person name="Hauf J."/>
            <person name="Berneiser S."/>
            <person name="Hempel S."/>
            <person name="Feldpausch M."/>
            <person name="Lamberth S."/>
            <person name="Villarroel R."/>
            <person name="Gielen J."/>
            <person name="Ardiles W."/>
            <person name="Bents O."/>
            <person name="Lemcke K."/>
            <person name="Kolesov G."/>
            <person name="Mayer K.F.X."/>
            <person name="Rudd S."/>
            <person name="Schoof H."/>
            <person name="Schueller C."/>
            <person name="Zaccaria P."/>
            <person name="Mewes H.-W."/>
            <person name="Bevan M."/>
            <person name="Fransz P.F."/>
        </authorList>
    </citation>
    <scope>NUCLEOTIDE SEQUENCE [LARGE SCALE GENOMIC DNA]</scope>
    <source>
        <strain>cv. Columbia</strain>
    </source>
</reference>
<reference key="2">
    <citation type="journal article" date="2017" name="Plant J.">
        <title>Araport11: a complete reannotation of the Arabidopsis thaliana reference genome.</title>
        <authorList>
            <person name="Cheng C.Y."/>
            <person name="Krishnakumar V."/>
            <person name="Chan A.P."/>
            <person name="Thibaud-Nissen F."/>
            <person name="Schobel S."/>
            <person name="Town C.D."/>
        </authorList>
    </citation>
    <scope>GENOME REANNOTATION</scope>
    <source>
        <strain>cv. Columbia</strain>
    </source>
</reference>
<reference key="3">
    <citation type="journal article" date="1998" name="Plant Sci.">
        <title>Differential accumulation of Arabidopsis thaliana Sbe 2.1 and Sbe 2.2 transcripts in response to light.</title>
        <authorList>
            <person name="Khoshnoodi J."/>
            <person name="Larsson C.-T."/>
            <person name="Larsson H."/>
            <person name="Rask L."/>
        </authorList>
    </citation>
    <scope>NUCLEOTIDE SEQUENCE [GENOMIC DNA] OF 1-81</scope>
    <scope>INDUCTION BY LIGHT</scope>
    <source>
        <strain>cv. Columbia</strain>
    </source>
</reference>
<reference key="4">
    <citation type="journal article" date="1996" name="Plant Mol. Biol.">
        <title>Two closely related cDNAs encoding starch branching enzyme from Arabidopsis thaliana.</title>
        <authorList>
            <person name="Fisher D.K."/>
            <person name="Gao M."/>
            <person name="Kim K.-N."/>
            <person name="Boyer C.D."/>
            <person name="Guiltinan M.J."/>
        </authorList>
    </citation>
    <scope>NUCLEOTIDE SEQUENCE [MRNA] OF 6-805</scope>
    <scope>TISSUE SPECIFICITY</scope>
    <source>
        <strain>cv. Columbia</strain>
        <tissue>Seedling hypocotyl</tissue>
    </source>
</reference>
<reference key="5">
    <citation type="journal article" date="2002" name="Science">
        <title>Functional annotation of a full-length Arabidopsis cDNA collection.</title>
        <authorList>
            <person name="Seki M."/>
            <person name="Narusaka M."/>
            <person name="Kamiya A."/>
            <person name="Ishida J."/>
            <person name="Satou M."/>
            <person name="Sakurai T."/>
            <person name="Nakajima M."/>
            <person name="Enju A."/>
            <person name="Akiyama K."/>
            <person name="Oono Y."/>
            <person name="Muramatsu M."/>
            <person name="Hayashizaki Y."/>
            <person name="Kawai J."/>
            <person name="Carninci P."/>
            <person name="Itoh M."/>
            <person name="Ishii Y."/>
            <person name="Arakawa T."/>
            <person name="Shibata K."/>
            <person name="Shinagawa A."/>
            <person name="Shinozaki K."/>
        </authorList>
    </citation>
    <scope>NUCLEOTIDE SEQUENCE [LARGE SCALE MRNA] OF 589-805</scope>
    <source>
        <strain>cv. Columbia</strain>
    </source>
</reference>
<reference key="6">
    <citation type="journal article" date="2006" name="Plant Cell">
        <title>Mutants of Arabidopsis lacking starch branching enzyme II substitute plastidial starch synthesis by cytoplasmic maltose accumulation.</title>
        <authorList>
            <person name="Dumez S."/>
            <person name="Wattebled F."/>
            <person name="Dauvillee D."/>
            <person name="Delvalle D."/>
            <person name="Planchot V."/>
            <person name="Ball S.G."/>
            <person name="D'Hulst C."/>
        </authorList>
    </citation>
    <scope>FUNCTION</scope>
    <scope>DISRUPTION PHENOTYPE</scope>
    <source>
        <strain>cv. Wassilewskija</strain>
    </source>
</reference>
<reference key="7">
    <citation type="journal article" date="2007" name="Gene">
        <title>Three orthologs in rice, Arabidopsis, and Populus encoding starch branching enzymes (SBEs) are different from other SBE gene families in plants.</title>
        <authorList>
            <person name="Han Y."/>
            <person name="Sun F.-J."/>
            <person name="Rosales-Mendoza S."/>
            <person name="Korban S.S."/>
        </authorList>
    </citation>
    <scope>TISSUE SPECIFICITY</scope>
    <scope>GENE FAMILY</scope>
    <scope>NOMENCLATURE</scope>
    <source>
        <strain>cv. Columbia</strain>
    </source>
</reference>
<reference key="8">
    <citation type="journal article" date="2008" name="PLoS ONE">
        <title>Sorting signals, N-terminal modifications and abundance of the chloroplast proteome.</title>
        <authorList>
            <person name="Zybailov B."/>
            <person name="Rutschow H."/>
            <person name="Friso G."/>
            <person name="Rudella A."/>
            <person name="Emanuelsson O."/>
            <person name="Sun Q."/>
            <person name="van Wijk K.J."/>
        </authorList>
    </citation>
    <scope>IDENTIFICATION BY MASS SPECTROMETRY</scope>
    <scope>SUBCELLULAR LOCATION [LARGE SCALE ANALYSIS]</scope>
    <source>
        <strain>cv. Columbia</strain>
    </source>
</reference>
<reference key="9">
    <citation type="journal article" date="2009" name="Plant J.">
        <title>The Arabidopsis ABA-INSENSITIVE (ABI) 4 factor acts as a central transcription activator of the expression of its own gene, and for the induction of ABI5 and SBE2.2 genes during sugar signaling.</title>
        <authorList>
            <person name="Bossi F."/>
            <person name="Cordoba E."/>
            <person name="Dupre P."/>
            <person name="Mendoza M.S."/>
            <person name="Roman C.S."/>
            <person name="Leon P."/>
        </authorList>
    </citation>
    <scope>INDUCTION BY GLUCOSE</scope>
    <source>
        <strain>cv. Columbia</strain>
    </source>
</reference>
<proteinExistence type="evidence at protein level"/>
<feature type="transit peptide" description="Chloroplast" evidence="1">
    <location>
        <begin position="1"/>
        <end position="32"/>
    </location>
</feature>
<feature type="chain" id="PRO_0000415336" description="1,4-alpha-glucan-branching enzyme 2-2, chloroplastic/amyloplastic">
    <location>
        <begin position="33"/>
        <end position="805"/>
    </location>
</feature>
<feature type="active site" description="Nucleophile" evidence="1">
    <location>
        <position position="451"/>
    </location>
</feature>
<feature type="active site" description="Proton donor" evidence="1">
    <location>
        <position position="506"/>
    </location>
</feature>
<feature type="sequence conflict" description="In Ref. 4; AAB03100." evidence="8" ref="4">
    <original>GV</original>
    <variation>RS</variation>
    <location>
        <begin position="6"/>
        <end position="7"/>
    </location>
</feature>
<evidence type="ECO:0000250" key="1"/>
<evidence type="ECO:0000269" key="2">
    <source>
    </source>
</evidence>
<evidence type="ECO:0000269" key="3">
    <source>
    </source>
</evidence>
<evidence type="ECO:0000269" key="4">
    <source>
    </source>
</evidence>
<evidence type="ECO:0000269" key="5">
    <source>
    </source>
</evidence>
<evidence type="ECO:0000269" key="6">
    <source>
    </source>
</evidence>
<evidence type="ECO:0000269" key="7">
    <source ref="3"/>
</evidence>
<evidence type="ECO:0000305" key="8"/>
<name>GLGB2_ARATH</name>
<gene>
    <name type="primary">SBE2.2</name>
    <name type="synonym">BE2</name>
    <name type="ordered locus">At5g03650</name>
    <name type="ORF">F17C15.70</name>
</gene>
<protein>
    <recommendedName>
        <fullName>1,4-alpha-glucan-branching enzyme 2-2, chloroplastic/amyloplastic</fullName>
        <shortName>AtSBE II-2</shortName>
        <ecNumber>2.4.1.18</ecNumber>
    </recommendedName>
    <alternativeName>
        <fullName>Branching enzyme 2</fullName>
        <shortName>AtBE2</shortName>
    </alternativeName>
    <alternativeName>
        <fullName>Starch-branching enzyme 2-2</fullName>
    </alternativeName>
</protein>
<dbReference type="EC" id="2.4.1.18"/>
<dbReference type="EMBL" id="AL162506">
    <property type="protein sequence ID" value="CAB82930.1"/>
    <property type="molecule type" value="Genomic_DNA"/>
</dbReference>
<dbReference type="EMBL" id="CP002688">
    <property type="protein sequence ID" value="AED90637.1"/>
    <property type="molecule type" value="Genomic_DNA"/>
</dbReference>
<dbReference type="EMBL" id="AJ005130">
    <property type="protein sequence ID" value="CAA06392.1"/>
    <property type="molecule type" value="Genomic_DNA"/>
</dbReference>
<dbReference type="EMBL" id="U22428">
    <property type="protein sequence ID" value="AAB03100.1"/>
    <property type="molecule type" value="mRNA"/>
</dbReference>
<dbReference type="EMBL" id="AK117729">
    <property type="protein sequence ID" value="BAC42378.1"/>
    <property type="molecule type" value="mRNA"/>
</dbReference>
<dbReference type="PIR" id="S65046">
    <property type="entry name" value="S65046"/>
</dbReference>
<dbReference type="PIR" id="T48392">
    <property type="entry name" value="T48392"/>
</dbReference>
<dbReference type="RefSeq" id="NP_195985.3">
    <property type="nucleotide sequence ID" value="NM_120446.4"/>
</dbReference>
<dbReference type="SMR" id="Q9LZS3"/>
<dbReference type="BioGRID" id="17045">
    <property type="interactions" value="8"/>
</dbReference>
<dbReference type="FunCoup" id="Q9LZS3">
    <property type="interactions" value="2541"/>
</dbReference>
<dbReference type="STRING" id="3702.Q9LZS3"/>
<dbReference type="CAZy" id="CBM48">
    <property type="family name" value="Carbohydrate-Binding Module Family 48"/>
</dbReference>
<dbReference type="CAZy" id="GH13">
    <property type="family name" value="Glycoside Hydrolase Family 13"/>
</dbReference>
<dbReference type="PaxDb" id="3702-AT5G03650.1"/>
<dbReference type="ProteomicsDB" id="248574"/>
<dbReference type="EnsemblPlants" id="AT5G03650.1">
    <property type="protein sequence ID" value="AT5G03650.1"/>
    <property type="gene ID" value="AT5G03650"/>
</dbReference>
<dbReference type="GeneID" id="831769"/>
<dbReference type="Gramene" id="AT5G03650.1">
    <property type="protein sequence ID" value="AT5G03650.1"/>
    <property type="gene ID" value="AT5G03650"/>
</dbReference>
<dbReference type="KEGG" id="ath:AT5G03650"/>
<dbReference type="Araport" id="AT5G03650"/>
<dbReference type="TAIR" id="AT5G03650">
    <property type="gene designation" value="SBE2.2"/>
</dbReference>
<dbReference type="eggNOG" id="KOG0470">
    <property type="taxonomic scope" value="Eukaryota"/>
</dbReference>
<dbReference type="HOGENOM" id="CLU_011131_2_2_1"/>
<dbReference type="InParanoid" id="Q9LZS3"/>
<dbReference type="OMA" id="MVNTYAN"/>
<dbReference type="OrthoDB" id="196493at2759"/>
<dbReference type="PhylomeDB" id="Q9LZS3"/>
<dbReference type="BioCyc" id="ARA:AT5G03650-MONOMER"/>
<dbReference type="BioCyc" id="MetaCyc:AT5G03650-MONOMER"/>
<dbReference type="UniPathway" id="UPA00152"/>
<dbReference type="PRO" id="PR:Q9LZS3"/>
<dbReference type="Proteomes" id="UP000006548">
    <property type="component" value="Chromosome 5"/>
</dbReference>
<dbReference type="ExpressionAtlas" id="Q9LZS3">
    <property type="expression patterns" value="baseline and differential"/>
</dbReference>
<dbReference type="GO" id="GO:0009501">
    <property type="term" value="C:amyloplast"/>
    <property type="evidence" value="ECO:0007669"/>
    <property type="project" value="UniProtKB-SubCell"/>
</dbReference>
<dbReference type="GO" id="GO:0009507">
    <property type="term" value="C:chloroplast"/>
    <property type="evidence" value="ECO:0007005"/>
    <property type="project" value="TAIR"/>
</dbReference>
<dbReference type="GO" id="GO:0009570">
    <property type="term" value="C:chloroplast stroma"/>
    <property type="evidence" value="ECO:0007005"/>
    <property type="project" value="TAIR"/>
</dbReference>
<dbReference type="GO" id="GO:0003844">
    <property type="term" value="F:1,4-alpha-glucan branching enzyme activity"/>
    <property type="evidence" value="ECO:0000314"/>
    <property type="project" value="TAIR"/>
</dbReference>
<dbReference type="GO" id="GO:0043169">
    <property type="term" value="F:cation binding"/>
    <property type="evidence" value="ECO:0007669"/>
    <property type="project" value="InterPro"/>
</dbReference>
<dbReference type="GO" id="GO:0004553">
    <property type="term" value="F:hydrolase activity, hydrolyzing O-glycosyl compounds"/>
    <property type="evidence" value="ECO:0007669"/>
    <property type="project" value="InterPro"/>
</dbReference>
<dbReference type="GO" id="GO:0010021">
    <property type="term" value="P:amylopectin biosynthetic process"/>
    <property type="evidence" value="ECO:0000304"/>
    <property type="project" value="TAIR"/>
</dbReference>
<dbReference type="GO" id="GO:0071332">
    <property type="term" value="P:cellular response to fructose stimulus"/>
    <property type="evidence" value="ECO:0000270"/>
    <property type="project" value="UniProtKB"/>
</dbReference>
<dbReference type="GO" id="GO:0071333">
    <property type="term" value="P:cellular response to glucose stimulus"/>
    <property type="evidence" value="ECO:0000270"/>
    <property type="project" value="UniProtKB"/>
</dbReference>
<dbReference type="GO" id="GO:0071482">
    <property type="term" value="P:cellular response to light stimulus"/>
    <property type="evidence" value="ECO:0000270"/>
    <property type="project" value="UniProtKB"/>
</dbReference>
<dbReference type="GO" id="GO:0071329">
    <property type="term" value="P:cellular response to sucrose stimulus"/>
    <property type="evidence" value="ECO:0000270"/>
    <property type="project" value="UniProtKB"/>
</dbReference>
<dbReference type="GO" id="GO:0005978">
    <property type="term" value="P:glycogen biosynthetic process"/>
    <property type="evidence" value="ECO:0007669"/>
    <property type="project" value="InterPro"/>
</dbReference>
<dbReference type="GO" id="GO:0019252">
    <property type="term" value="P:starch biosynthetic process"/>
    <property type="evidence" value="ECO:0007669"/>
    <property type="project" value="UniProtKB-UniPathway"/>
</dbReference>
<dbReference type="GO" id="GO:0005982">
    <property type="term" value="P:starch metabolic process"/>
    <property type="evidence" value="ECO:0000315"/>
    <property type="project" value="TAIR"/>
</dbReference>
<dbReference type="CDD" id="cd11321">
    <property type="entry name" value="AmyAc_bac_euk_BE"/>
    <property type="match status" value="1"/>
</dbReference>
<dbReference type="CDD" id="cd02854">
    <property type="entry name" value="E_set_GBE_euk_N"/>
    <property type="match status" value="1"/>
</dbReference>
<dbReference type="FunFam" id="3.20.20.80:FF:000001">
    <property type="entry name" value="1,4-alpha-glucan branching enzyme"/>
    <property type="match status" value="1"/>
</dbReference>
<dbReference type="FunFam" id="2.60.40.10:FF:000250">
    <property type="entry name" value="1,4-alpha-glucan-branching enzyme, chloroplastic/amyloplastic"/>
    <property type="match status" value="1"/>
</dbReference>
<dbReference type="FunFam" id="2.60.40.1180:FF:000003">
    <property type="entry name" value="1,4-alpha-glucan-branching enzyme, chloroplastic/amyloplastic"/>
    <property type="match status" value="1"/>
</dbReference>
<dbReference type="Gene3D" id="3.20.20.80">
    <property type="entry name" value="Glycosidases"/>
    <property type="match status" value="1"/>
</dbReference>
<dbReference type="Gene3D" id="2.60.40.1180">
    <property type="entry name" value="Golgi alpha-mannosidase II"/>
    <property type="match status" value="1"/>
</dbReference>
<dbReference type="Gene3D" id="2.60.40.10">
    <property type="entry name" value="Immunoglobulins"/>
    <property type="match status" value="1"/>
</dbReference>
<dbReference type="InterPro" id="IPR006048">
    <property type="entry name" value="A-amylase/branching_C"/>
</dbReference>
<dbReference type="InterPro" id="IPR037439">
    <property type="entry name" value="Branching_enzy"/>
</dbReference>
<dbReference type="InterPro" id="IPR006047">
    <property type="entry name" value="Glyco_hydro_13_cat_dom"/>
</dbReference>
<dbReference type="InterPro" id="IPR004193">
    <property type="entry name" value="Glyco_hydro_13_N"/>
</dbReference>
<dbReference type="InterPro" id="IPR013780">
    <property type="entry name" value="Glyco_hydro_b"/>
</dbReference>
<dbReference type="InterPro" id="IPR017853">
    <property type="entry name" value="Glycoside_hydrolase_SF"/>
</dbReference>
<dbReference type="InterPro" id="IPR013783">
    <property type="entry name" value="Ig-like_fold"/>
</dbReference>
<dbReference type="InterPro" id="IPR014756">
    <property type="entry name" value="Ig_E-set"/>
</dbReference>
<dbReference type="PANTHER" id="PTHR43651">
    <property type="entry name" value="1,4-ALPHA-GLUCAN-BRANCHING ENZYME"/>
    <property type="match status" value="1"/>
</dbReference>
<dbReference type="PANTHER" id="PTHR43651:SF3">
    <property type="entry name" value="1,4-ALPHA-GLUCAN-BRANCHING ENZYME"/>
    <property type="match status" value="1"/>
</dbReference>
<dbReference type="Pfam" id="PF00128">
    <property type="entry name" value="Alpha-amylase"/>
    <property type="match status" value="1"/>
</dbReference>
<dbReference type="Pfam" id="PF02806">
    <property type="entry name" value="Alpha-amylase_C"/>
    <property type="match status" value="1"/>
</dbReference>
<dbReference type="Pfam" id="PF02922">
    <property type="entry name" value="CBM_48"/>
    <property type="match status" value="1"/>
</dbReference>
<dbReference type="PIRSF" id="PIRSF000463">
    <property type="entry name" value="GlgB"/>
    <property type="match status" value="1"/>
</dbReference>
<dbReference type="SMART" id="SM00642">
    <property type="entry name" value="Aamy"/>
    <property type="match status" value="1"/>
</dbReference>
<dbReference type="SUPFAM" id="SSF51445">
    <property type="entry name" value="(Trans)glycosidases"/>
    <property type="match status" value="1"/>
</dbReference>
<dbReference type="SUPFAM" id="SSF81296">
    <property type="entry name" value="E set domains"/>
    <property type="match status" value="1"/>
</dbReference>
<dbReference type="SUPFAM" id="SSF51011">
    <property type="entry name" value="Glycosyl hydrolase domain"/>
    <property type="match status" value="1"/>
</dbReference>
<accession>Q9LZS3</accession>
<accession>O81711</accession>
<accession>Q42531</accession>
<accession>Q8GYC4</accession>
<comment type="function">
    <text evidence="2">Catalyzes the formation of the alpha-1,6-glucosidic linkages in starch by scission of a 1,4-alpha-linked oligosaccharide from growing alpha-1,4-glucan chains and the subsequent attachment of the oligosaccharide to the alpha-1,6 position.</text>
</comment>
<comment type="catalytic activity">
    <reaction>
        <text>Transfers a segment of a (1-&gt;4)-alpha-D-glucan chain to a primary hydroxy group in a similar glucan chain.</text>
        <dbReference type="EC" id="2.4.1.18"/>
    </reaction>
</comment>
<comment type="pathway">
    <text>Glycan biosynthesis; starch biosynthesis.</text>
</comment>
<comment type="subunit">
    <text evidence="1">Monomer.</text>
</comment>
<comment type="subcellular location">
    <subcellularLocation>
        <location evidence="4">Plastid</location>
        <location evidence="4">Chloroplast stroma</location>
    </subcellularLocation>
    <subcellularLocation>
        <location evidence="1">Plastid</location>
        <location evidence="1">Amyloplast</location>
    </subcellularLocation>
</comment>
<comment type="tissue specificity">
    <text evidence="3 6">Expressed in seedlings, roots, stems, leaves, inflorescences, seeds and flowers.</text>
</comment>
<comment type="induction">
    <text evidence="5 7">Induced by light when associated with glucose, fructose or sucrose treatment. Induction by glucose is mediated by the transcription factor ABI4.</text>
</comment>
<comment type="disruption phenotype">
    <text evidence="2">Modified starch composition. This phenotype is enhanced when associated with SBE2.1 and SBE3 disruptions.</text>
</comment>
<comment type="similarity">
    <text evidence="8">Belongs to the glycosyl hydrolase 13 family. GlgB subfamily.</text>
</comment>
<keyword id="KW-0035">Amyloplast</keyword>
<keyword id="KW-0150">Chloroplast</keyword>
<keyword id="KW-0328">Glycosyltransferase</keyword>
<keyword id="KW-0934">Plastid</keyword>
<keyword id="KW-1185">Reference proteome</keyword>
<keyword id="KW-0808">Transferase</keyword>
<keyword id="KW-0809">Transit peptide</keyword>
<organism>
    <name type="scientific">Arabidopsis thaliana</name>
    <name type="common">Mouse-ear cress</name>
    <dbReference type="NCBI Taxonomy" id="3702"/>
    <lineage>
        <taxon>Eukaryota</taxon>
        <taxon>Viridiplantae</taxon>
        <taxon>Streptophyta</taxon>
        <taxon>Embryophyta</taxon>
        <taxon>Tracheophyta</taxon>
        <taxon>Spermatophyta</taxon>
        <taxon>Magnoliopsida</taxon>
        <taxon>eudicotyledons</taxon>
        <taxon>Gunneridae</taxon>
        <taxon>Pentapetalae</taxon>
        <taxon>rosids</taxon>
        <taxon>malvids</taxon>
        <taxon>Brassicales</taxon>
        <taxon>Brassicaceae</taxon>
        <taxon>Camelineae</taxon>
        <taxon>Arabidopsis</taxon>
    </lineage>
</organism>